<name>HBB_AYTFU</name>
<accession>P84792</accession>
<feature type="initiator methionine" description="Removed" evidence="2">
    <location>
        <position position="1"/>
    </location>
</feature>
<feature type="chain" id="PRO_0000227533" description="Hemoglobin subunit beta">
    <location>
        <begin position="2"/>
        <end position="147"/>
    </location>
</feature>
<feature type="domain" description="Globin" evidence="1">
    <location>
        <begin position="3"/>
        <end position="147"/>
    </location>
</feature>
<feature type="binding site" description="distal binding residue">
    <location>
        <position position="64"/>
    </location>
    <ligand>
        <name>heme b</name>
        <dbReference type="ChEBI" id="CHEBI:60344"/>
    </ligand>
    <ligandPart>
        <name>Fe</name>
        <dbReference type="ChEBI" id="CHEBI:18248"/>
    </ligandPart>
</feature>
<feature type="binding site" description="proximal binding residue">
    <location>
        <position position="93"/>
    </location>
    <ligand>
        <name>heme b</name>
        <dbReference type="ChEBI" id="CHEBI:60344"/>
    </ligand>
    <ligandPart>
        <name>Fe</name>
        <dbReference type="ChEBI" id="CHEBI:18248"/>
    </ligandPart>
</feature>
<dbReference type="SMR" id="P84792"/>
<dbReference type="FunCoup" id="P84792">
    <property type="interactions" value="47"/>
</dbReference>
<dbReference type="InParanoid" id="P84792"/>
<dbReference type="Proteomes" id="UP000504639">
    <property type="component" value="Unplaced"/>
</dbReference>
<dbReference type="GO" id="GO:0072562">
    <property type="term" value="C:blood microparticle"/>
    <property type="evidence" value="ECO:0007669"/>
    <property type="project" value="TreeGrafter"/>
</dbReference>
<dbReference type="GO" id="GO:0031838">
    <property type="term" value="C:haptoglobin-hemoglobin complex"/>
    <property type="evidence" value="ECO:0007669"/>
    <property type="project" value="TreeGrafter"/>
</dbReference>
<dbReference type="GO" id="GO:0005833">
    <property type="term" value="C:hemoglobin complex"/>
    <property type="evidence" value="ECO:0000314"/>
    <property type="project" value="UniProtKB"/>
</dbReference>
<dbReference type="GO" id="GO:0031720">
    <property type="term" value="F:haptoglobin binding"/>
    <property type="evidence" value="ECO:0007669"/>
    <property type="project" value="TreeGrafter"/>
</dbReference>
<dbReference type="GO" id="GO:0020037">
    <property type="term" value="F:heme binding"/>
    <property type="evidence" value="ECO:0007669"/>
    <property type="project" value="InterPro"/>
</dbReference>
<dbReference type="GO" id="GO:0046872">
    <property type="term" value="F:metal ion binding"/>
    <property type="evidence" value="ECO:0007669"/>
    <property type="project" value="UniProtKB-KW"/>
</dbReference>
<dbReference type="GO" id="GO:0043177">
    <property type="term" value="F:organic acid binding"/>
    <property type="evidence" value="ECO:0007669"/>
    <property type="project" value="TreeGrafter"/>
</dbReference>
<dbReference type="GO" id="GO:0019825">
    <property type="term" value="F:oxygen binding"/>
    <property type="evidence" value="ECO:0000314"/>
    <property type="project" value="UniProtKB"/>
</dbReference>
<dbReference type="GO" id="GO:0005344">
    <property type="term" value="F:oxygen carrier activity"/>
    <property type="evidence" value="ECO:0007669"/>
    <property type="project" value="UniProtKB-KW"/>
</dbReference>
<dbReference type="GO" id="GO:0004601">
    <property type="term" value="F:peroxidase activity"/>
    <property type="evidence" value="ECO:0007669"/>
    <property type="project" value="TreeGrafter"/>
</dbReference>
<dbReference type="GO" id="GO:0042744">
    <property type="term" value="P:hydrogen peroxide catabolic process"/>
    <property type="evidence" value="ECO:0007669"/>
    <property type="project" value="TreeGrafter"/>
</dbReference>
<dbReference type="GO" id="GO:0015671">
    <property type="term" value="P:oxygen transport"/>
    <property type="evidence" value="ECO:0000314"/>
    <property type="project" value="UniProtKB"/>
</dbReference>
<dbReference type="CDD" id="cd08925">
    <property type="entry name" value="Hb-beta-like"/>
    <property type="match status" value="1"/>
</dbReference>
<dbReference type="FunFam" id="1.10.490.10:FF:000001">
    <property type="entry name" value="Hemoglobin subunit beta"/>
    <property type="match status" value="1"/>
</dbReference>
<dbReference type="Gene3D" id="1.10.490.10">
    <property type="entry name" value="Globins"/>
    <property type="match status" value="1"/>
</dbReference>
<dbReference type="InterPro" id="IPR000971">
    <property type="entry name" value="Globin"/>
</dbReference>
<dbReference type="InterPro" id="IPR009050">
    <property type="entry name" value="Globin-like_sf"/>
</dbReference>
<dbReference type="InterPro" id="IPR012292">
    <property type="entry name" value="Globin/Proto"/>
</dbReference>
<dbReference type="InterPro" id="IPR002337">
    <property type="entry name" value="Hemoglobin_b"/>
</dbReference>
<dbReference type="InterPro" id="IPR050056">
    <property type="entry name" value="Hemoglobin_oxygen_transport"/>
</dbReference>
<dbReference type="PANTHER" id="PTHR11442">
    <property type="entry name" value="HEMOGLOBIN FAMILY MEMBER"/>
    <property type="match status" value="1"/>
</dbReference>
<dbReference type="PANTHER" id="PTHR11442:SF7">
    <property type="entry name" value="HEMOGLOBIN SUBUNIT EPSILON"/>
    <property type="match status" value="1"/>
</dbReference>
<dbReference type="Pfam" id="PF00042">
    <property type="entry name" value="Globin"/>
    <property type="match status" value="1"/>
</dbReference>
<dbReference type="PRINTS" id="PR00814">
    <property type="entry name" value="BETAHAEM"/>
</dbReference>
<dbReference type="SUPFAM" id="SSF46458">
    <property type="entry name" value="Globin-like"/>
    <property type="match status" value="1"/>
</dbReference>
<dbReference type="PROSITE" id="PS01033">
    <property type="entry name" value="GLOBIN"/>
    <property type="match status" value="1"/>
</dbReference>
<keyword id="KW-0903">Direct protein sequencing</keyword>
<keyword id="KW-0349">Heme</keyword>
<keyword id="KW-0408">Iron</keyword>
<keyword id="KW-0479">Metal-binding</keyword>
<keyword id="KW-0561">Oxygen transport</keyword>
<keyword id="KW-1185">Reference proteome</keyword>
<keyword id="KW-0813">Transport</keyword>
<proteinExistence type="evidence at protein level"/>
<organism>
    <name type="scientific">Aythya fuligula</name>
    <name type="common">Tufted duck</name>
    <name type="synonym">Anas fuligula</name>
    <dbReference type="NCBI Taxonomy" id="219594"/>
    <lineage>
        <taxon>Eukaryota</taxon>
        <taxon>Metazoa</taxon>
        <taxon>Chordata</taxon>
        <taxon>Craniata</taxon>
        <taxon>Vertebrata</taxon>
        <taxon>Euteleostomi</taxon>
        <taxon>Archelosauria</taxon>
        <taxon>Archosauria</taxon>
        <taxon>Dinosauria</taxon>
        <taxon>Saurischia</taxon>
        <taxon>Theropoda</taxon>
        <taxon>Coelurosauria</taxon>
        <taxon>Aves</taxon>
        <taxon>Neognathae</taxon>
        <taxon>Galloanserae</taxon>
        <taxon>Anseriformes</taxon>
        <taxon>Anatidae</taxon>
        <taxon>Aythyinae</taxon>
        <taxon>Aythya</taxon>
    </lineage>
</organism>
<protein>
    <recommendedName>
        <fullName>Hemoglobin subunit beta</fullName>
    </recommendedName>
    <alternativeName>
        <fullName>Beta-globin</fullName>
    </alternativeName>
    <alternativeName>
        <fullName>Hemoglobin beta chain</fullName>
    </alternativeName>
</protein>
<reference evidence="4" key="1">
    <citation type="journal article" date="2002" name="Biochem. Biophys. Res. Commun.">
        <title>Molecular basis of bird respiration: primary hemoglobin structure component from Tufted duck (Aythya fuligula, Anseriformes)-role of alpha99Arg in formation of a complex salt bridge network.</title>
        <authorList>
            <person name="Abbasi A."/>
            <person name="Lutfullah G."/>
        </authorList>
    </citation>
    <scope>PROTEIN SEQUENCE OF 2-147</scope>
    <scope>MASS SPECTROMETRY</scope>
    <source>
        <tissue evidence="2">Erythrocyte</tissue>
    </source>
</reference>
<reference evidence="4" key="2">
    <citation type="journal article" date="2005" name="Biochem. Biophys. Res. Commun.">
        <title>Molecular mechanism of high altitude respiration: primary structure of a minor hemoglobin component from Tufted duck (Aythya fuligula, Anseriformes).</title>
        <authorList>
            <person name="Lutfullah G."/>
            <person name="Ali S.A."/>
            <person name="Abbasi A."/>
        </authorList>
    </citation>
    <scope>MASS SPECTROMETRY</scope>
</reference>
<comment type="function">
    <text evidence="4">Involved in oxygen transport from the lung to the various peripheral tissues. The beta chain is a component of adult hemoglobin A and D.</text>
</comment>
<comment type="subunit">
    <text>Heterotetramer of two alpha (or alpha-D) and two beta chains.</text>
</comment>
<comment type="tissue specificity">
    <text evidence="4">Red blood cells.</text>
</comment>
<comment type="mass spectrometry" mass="16321.19" error="1.16" method="Electrospray" evidence="2"/>
<comment type="mass spectrometry" mass="16321.0" method="Electrospray" evidence="3"/>
<comment type="similarity">
    <text evidence="1">Belongs to the globin family.</text>
</comment>
<evidence type="ECO:0000255" key="1">
    <source>
        <dbReference type="PROSITE-ProRule" id="PRU00238"/>
    </source>
</evidence>
<evidence type="ECO:0000269" key="2">
    <source>
    </source>
</evidence>
<evidence type="ECO:0000269" key="3">
    <source>
    </source>
</evidence>
<evidence type="ECO:0000305" key="4"/>
<sequence length="147" mass="16452">MVHWTAEEKQIITGLWGKVNVADCGAEALARLLIVYPWTQRFFSSFGNLSSPTAILGNPMVRAHGKKVLTSFGDAVKNLDNIKNTFAQLSELHCDKLHVDPENFRLLGDILIVVLAAHFSKEFTPECQAAWQKLVRVVAHALARKYH</sequence>